<gene>
    <name evidence="1" type="primary">rnhB</name>
    <name type="ordered locus">Tbd_0799</name>
</gene>
<proteinExistence type="inferred from homology"/>
<dbReference type="EC" id="3.1.26.4" evidence="1"/>
<dbReference type="EMBL" id="CP000116">
    <property type="protein sequence ID" value="AAZ96752.1"/>
    <property type="molecule type" value="Genomic_DNA"/>
</dbReference>
<dbReference type="RefSeq" id="WP_011311311.1">
    <property type="nucleotide sequence ID" value="NC_007404.1"/>
</dbReference>
<dbReference type="SMR" id="Q3SKM7"/>
<dbReference type="STRING" id="292415.Tbd_0799"/>
<dbReference type="KEGG" id="tbd:Tbd_0799"/>
<dbReference type="eggNOG" id="COG0164">
    <property type="taxonomic scope" value="Bacteria"/>
</dbReference>
<dbReference type="HOGENOM" id="CLU_036532_3_2_4"/>
<dbReference type="OrthoDB" id="9803420at2"/>
<dbReference type="Proteomes" id="UP000008291">
    <property type="component" value="Chromosome"/>
</dbReference>
<dbReference type="GO" id="GO:0005737">
    <property type="term" value="C:cytoplasm"/>
    <property type="evidence" value="ECO:0007669"/>
    <property type="project" value="UniProtKB-SubCell"/>
</dbReference>
<dbReference type="GO" id="GO:0032299">
    <property type="term" value="C:ribonuclease H2 complex"/>
    <property type="evidence" value="ECO:0007669"/>
    <property type="project" value="TreeGrafter"/>
</dbReference>
<dbReference type="GO" id="GO:0030145">
    <property type="term" value="F:manganese ion binding"/>
    <property type="evidence" value="ECO:0007669"/>
    <property type="project" value="UniProtKB-UniRule"/>
</dbReference>
<dbReference type="GO" id="GO:0003723">
    <property type="term" value="F:RNA binding"/>
    <property type="evidence" value="ECO:0007669"/>
    <property type="project" value="InterPro"/>
</dbReference>
<dbReference type="GO" id="GO:0004523">
    <property type="term" value="F:RNA-DNA hybrid ribonuclease activity"/>
    <property type="evidence" value="ECO:0007669"/>
    <property type="project" value="UniProtKB-UniRule"/>
</dbReference>
<dbReference type="GO" id="GO:0043137">
    <property type="term" value="P:DNA replication, removal of RNA primer"/>
    <property type="evidence" value="ECO:0007669"/>
    <property type="project" value="TreeGrafter"/>
</dbReference>
<dbReference type="GO" id="GO:0006298">
    <property type="term" value="P:mismatch repair"/>
    <property type="evidence" value="ECO:0007669"/>
    <property type="project" value="TreeGrafter"/>
</dbReference>
<dbReference type="CDD" id="cd07182">
    <property type="entry name" value="RNase_HII_bacteria_HII_like"/>
    <property type="match status" value="1"/>
</dbReference>
<dbReference type="FunFam" id="3.30.420.10:FF:000006">
    <property type="entry name" value="Ribonuclease HII"/>
    <property type="match status" value="1"/>
</dbReference>
<dbReference type="Gene3D" id="3.30.420.10">
    <property type="entry name" value="Ribonuclease H-like superfamily/Ribonuclease H"/>
    <property type="match status" value="1"/>
</dbReference>
<dbReference type="HAMAP" id="MF_00052_B">
    <property type="entry name" value="RNase_HII_B"/>
    <property type="match status" value="1"/>
</dbReference>
<dbReference type="InterPro" id="IPR022898">
    <property type="entry name" value="RNase_HII"/>
</dbReference>
<dbReference type="InterPro" id="IPR001352">
    <property type="entry name" value="RNase_HII/HIII"/>
</dbReference>
<dbReference type="InterPro" id="IPR024567">
    <property type="entry name" value="RNase_HII/HIII_dom"/>
</dbReference>
<dbReference type="InterPro" id="IPR012337">
    <property type="entry name" value="RNaseH-like_sf"/>
</dbReference>
<dbReference type="InterPro" id="IPR036397">
    <property type="entry name" value="RNaseH_sf"/>
</dbReference>
<dbReference type="NCBIfam" id="NF000595">
    <property type="entry name" value="PRK00015.1-3"/>
    <property type="match status" value="1"/>
</dbReference>
<dbReference type="NCBIfam" id="NF000596">
    <property type="entry name" value="PRK00015.1-4"/>
    <property type="match status" value="1"/>
</dbReference>
<dbReference type="PANTHER" id="PTHR10954">
    <property type="entry name" value="RIBONUCLEASE H2 SUBUNIT A"/>
    <property type="match status" value="1"/>
</dbReference>
<dbReference type="PANTHER" id="PTHR10954:SF18">
    <property type="entry name" value="RIBONUCLEASE HII"/>
    <property type="match status" value="1"/>
</dbReference>
<dbReference type="Pfam" id="PF01351">
    <property type="entry name" value="RNase_HII"/>
    <property type="match status" value="1"/>
</dbReference>
<dbReference type="SUPFAM" id="SSF53098">
    <property type="entry name" value="Ribonuclease H-like"/>
    <property type="match status" value="1"/>
</dbReference>
<dbReference type="PROSITE" id="PS51975">
    <property type="entry name" value="RNASE_H_2"/>
    <property type="match status" value="1"/>
</dbReference>
<keyword id="KW-0963">Cytoplasm</keyword>
<keyword id="KW-0255">Endonuclease</keyword>
<keyword id="KW-0378">Hydrolase</keyword>
<keyword id="KW-0464">Manganese</keyword>
<keyword id="KW-0479">Metal-binding</keyword>
<keyword id="KW-0540">Nuclease</keyword>
<keyword id="KW-1185">Reference proteome</keyword>
<protein>
    <recommendedName>
        <fullName evidence="1">Ribonuclease HII</fullName>
        <shortName evidence="1">RNase HII</shortName>
        <ecNumber evidence="1">3.1.26.4</ecNumber>
    </recommendedName>
</protein>
<sequence length="204" mass="21957">MTGRRTVSLHVGPVGLCGVDEAGRGPLAGPVVAAAVMLDPKRPIKGLRDSKKLTPAARERLADEIRARALAWCVAEASVAEIDRLNILHATMLAMQRAVAGMSHAPDDVWVDGDRCPEWTWRSQAVVQGDDKVAAIAAASILAKTVRDELMRGLHEAYPLYGFAQHMGYATAAHLAALKANGACPHHRRSFAPVRLLLDQTSLF</sequence>
<reference key="1">
    <citation type="journal article" date="2006" name="J. Bacteriol.">
        <title>The genome sequence of the obligately chemolithoautotrophic, facultatively anaerobic bacterium Thiobacillus denitrificans.</title>
        <authorList>
            <person name="Beller H.R."/>
            <person name="Chain P.S."/>
            <person name="Letain T.E."/>
            <person name="Chakicherla A."/>
            <person name="Larimer F.W."/>
            <person name="Richardson P.M."/>
            <person name="Coleman M.A."/>
            <person name="Wood A.P."/>
            <person name="Kelly D.P."/>
        </authorList>
    </citation>
    <scope>NUCLEOTIDE SEQUENCE [LARGE SCALE GENOMIC DNA]</scope>
    <source>
        <strain>ATCC 25259 / T1</strain>
    </source>
</reference>
<organism>
    <name type="scientific">Thiobacillus denitrificans (strain ATCC 25259 / T1)</name>
    <dbReference type="NCBI Taxonomy" id="292415"/>
    <lineage>
        <taxon>Bacteria</taxon>
        <taxon>Pseudomonadati</taxon>
        <taxon>Pseudomonadota</taxon>
        <taxon>Betaproteobacteria</taxon>
        <taxon>Nitrosomonadales</taxon>
        <taxon>Thiobacillaceae</taxon>
        <taxon>Thiobacillus</taxon>
    </lineage>
</organism>
<accession>Q3SKM7</accession>
<evidence type="ECO:0000255" key="1">
    <source>
        <dbReference type="HAMAP-Rule" id="MF_00052"/>
    </source>
</evidence>
<evidence type="ECO:0000255" key="2">
    <source>
        <dbReference type="PROSITE-ProRule" id="PRU01319"/>
    </source>
</evidence>
<name>RNH2_THIDA</name>
<comment type="function">
    <text evidence="1">Endonuclease that specifically degrades the RNA of RNA-DNA hybrids.</text>
</comment>
<comment type="catalytic activity">
    <reaction evidence="1">
        <text>Endonucleolytic cleavage to 5'-phosphomonoester.</text>
        <dbReference type="EC" id="3.1.26.4"/>
    </reaction>
</comment>
<comment type="cofactor">
    <cofactor evidence="1">
        <name>Mn(2+)</name>
        <dbReference type="ChEBI" id="CHEBI:29035"/>
    </cofactor>
    <cofactor evidence="1">
        <name>Mg(2+)</name>
        <dbReference type="ChEBI" id="CHEBI:18420"/>
    </cofactor>
    <text evidence="1">Manganese or magnesium. Binds 1 divalent metal ion per monomer in the absence of substrate. May bind a second metal ion after substrate binding.</text>
</comment>
<comment type="subcellular location">
    <subcellularLocation>
        <location evidence="1">Cytoplasm</location>
    </subcellularLocation>
</comment>
<comment type="similarity">
    <text evidence="1">Belongs to the RNase HII family.</text>
</comment>
<feature type="chain" id="PRO_0000235786" description="Ribonuclease HII">
    <location>
        <begin position="1"/>
        <end position="204"/>
    </location>
</feature>
<feature type="domain" description="RNase H type-2" evidence="2">
    <location>
        <begin position="14"/>
        <end position="203"/>
    </location>
</feature>
<feature type="binding site" evidence="1">
    <location>
        <position position="20"/>
    </location>
    <ligand>
        <name>a divalent metal cation</name>
        <dbReference type="ChEBI" id="CHEBI:60240"/>
    </ligand>
</feature>
<feature type="binding site" evidence="1">
    <location>
        <position position="21"/>
    </location>
    <ligand>
        <name>a divalent metal cation</name>
        <dbReference type="ChEBI" id="CHEBI:60240"/>
    </ligand>
</feature>
<feature type="binding site" evidence="1">
    <location>
        <position position="112"/>
    </location>
    <ligand>
        <name>a divalent metal cation</name>
        <dbReference type="ChEBI" id="CHEBI:60240"/>
    </ligand>
</feature>